<organism>
    <name type="scientific">Janthinobacterium sp. (strain Marseille)</name>
    <name type="common">Minibacterium massiliensis</name>
    <dbReference type="NCBI Taxonomy" id="375286"/>
    <lineage>
        <taxon>Bacteria</taxon>
        <taxon>Pseudomonadati</taxon>
        <taxon>Pseudomonadota</taxon>
        <taxon>Betaproteobacteria</taxon>
        <taxon>Burkholderiales</taxon>
        <taxon>Oxalobacteraceae</taxon>
        <taxon>Janthinobacterium</taxon>
    </lineage>
</organism>
<feature type="chain" id="PRO_1000051060" description="Small ribosomal subunit protein uS19">
    <location>
        <begin position="1"/>
        <end position="91"/>
    </location>
</feature>
<gene>
    <name evidence="1" type="primary">rpsS</name>
    <name type="ordered locus">mma_3407</name>
</gene>
<proteinExistence type="inferred from homology"/>
<comment type="function">
    <text evidence="1">Protein S19 forms a complex with S13 that binds strongly to the 16S ribosomal RNA.</text>
</comment>
<comment type="similarity">
    <text evidence="1">Belongs to the universal ribosomal protein uS19 family.</text>
</comment>
<name>RS19_JANMA</name>
<reference key="1">
    <citation type="journal article" date="2007" name="PLoS Genet.">
        <title>Genome analysis of Minibacterium massiliensis highlights the convergent evolution of water-living bacteria.</title>
        <authorList>
            <person name="Audic S."/>
            <person name="Robert C."/>
            <person name="Campagna B."/>
            <person name="Parinello H."/>
            <person name="Claverie J.-M."/>
            <person name="Raoult D."/>
            <person name="Drancourt M."/>
        </authorList>
    </citation>
    <scope>NUCLEOTIDE SEQUENCE [LARGE SCALE GENOMIC DNA]</scope>
    <source>
        <strain>Marseille</strain>
    </source>
</reference>
<sequence length="91" mass="10199">MTRSLKKGPFCDAHLVKKVETAQAIKDKKPIKTWSRRSTIMPDFIGLTIAVHNGKQHVPVYVSENMVGHKLGEFALTRTFKGHAADKKAKK</sequence>
<dbReference type="EMBL" id="CP000269">
    <property type="protein sequence ID" value="ABR91657.1"/>
    <property type="molecule type" value="Genomic_DNA"/>
</dbReference>
<dbReference type="RefSeq" id="WP_008113170.1">
    <property type="nucleotide sequence ID" value="NC_009659.1"/>
</dbReference>
<dbReference type="SMR" id="A6T3K0"/>
<dbReference type="STRING" id="375286.mma_3407"/>
<dbReference type="KEGG" id="mms:mma_3407"/>
<dbReference type="eggNOG" id="COG0185">
    <property type="taxonomic scope" value="Bacteria"/>
</dbReference>
<dbReference type="HOGENOM" id="CLU_144911_0_1_4"/>
<dbReference type="OrthoDB" id="9797833at2"/>
<dbReference type="Proteomes" id="UP000006388">
    <property type="component" value="Chromosome"/>
</dbReference>
<dbReference type="GO" id="GO:0005737">
    <property type="term" value="C:cytoplasm"/>
    <property type="evidence" value="ECO:0007669"/>
    <property type="project" value="UniProtKB-ARBA"/>
</dbReference>
<dbReference type="GO" id="GO:0015935">
    <property type="term" value="C:small ribosomal subunit"/>
    <property type="evidence" value="ECO:0007669"/>
    <property type="project" value="InterPro"/>
</dbReference>
<dbReference type="GO" id="GO:0019843">
    <property type="term" value="F:rRNA binding"/>
    <property type="evidence" value="ECO:0007669"/>
    <property type="project" value="UniProtKB-UniRule"/>
</dbReference>
<dbReference type="GO" id="GO:0003735">
    <property type="term" value="F:structural constituent of ribosome"/>
    <property type="evidence" value="ECO:0007669"/>
    <property type="project" value="InterPro"/>
</dbReference>
<dbReference type="GO" id="GO:0000028">
    <property type="term" value="P:ribosomal small subunit assembly"/>
    <property type="evidence" value="ECO:0007669"/>
    <property type="project" value="TreeGrafter"/>
</dbReference>
<dbReference type="GO" id="GO:0006412">
    <property type="term" value="P:translation"/>
    <property type="evidence" value="ECO:0007669"/>
    <property type="project" value="UniProtKB-UniRule"/>
</dbReference>
<dbReference type="FunFam" id="3.30.860.10:FF:000001">
    <property type="entry name" value="30S ribosomal protein S19"/>
    <property type="match status" value="1"/>
</dbReference>
<dbReference type="Gene3D" id="3.30.860.10">
    <property type="entry name" value="30s Ribosomal Protein S19, Chain A"/>
    <property type="match status" value="1"/>
</dbReference>
<dbReference type="HAMAP" id="MF_00531">
    <property type="entry name" value="Ribosomal_uS19"/>
    <property type="match status" value="1"/>
</dbReference>
<dbReference type="InterPro" id="IPR002222">
    <property type="entry name" value="Ribosomal_uS19"/>
</dbReference>
<dbReference type="InterPro" id="IPR005732">
    <property type="entry name" value="Ribosomal_uS19_bac-type"/>
</dbReference>
<dbReference type="InterPro" id="IPR020934">
    <property type="entry name" value="Ribosomal_uS19_CS"/>
</dbReference>
<dbReference type="InterPro" id="IPR023575">
    <property type="entry name" value="Ribosomal_uS19_SF"/>
</dbReference>
<dbReference type="NCBIfam" id="TIGR01050">
    <property type="entry name" value="rpsS_bact"/>
    <property type="match status" value="1"/>
</dbReference>
<dbReference type="PANTHER" id="PTHR11880">
    <property type="entry name" value="RIBOSOMAL PROTEIN S19P FAMILY MEMBER"/>
    <property type="match status" value="1"/>
</dbReference>
<dbReference type="PANTHER" id="PTHR11880:SF8">
    <property type="entry name" value="SMALL RIBOSOMAL SUBUNIT PROTEIN US19M"/>
    <property type="match status" value="1"/>
</dbReference>
<dbReference type="Pfam" id="PF00203">
    <property type="entry name" value="Ribosomal_S19"/>
    <property type="match status" value="1"/>
</dbReference>
<dbReference type="PIRSF" id="PIRSF002144">
    <property type="entry name" value="Ribosomal_S19"/>
    <property type="match status" value="1"/>
</dbReference>
<dbReference type="PRINTS" id="PR00975">
    <property type="entry name" value="RIBOSOMALS19"/>
</dbReference>
<dbReference type="SUPFAM" id="SSF54570">
    <property type="entry name" value="Ribosomal protein S19"/>
    <property type="match status" value="1"/>
</dbReference>
<dbReference type="PROSITE" id="PS00323">
    <property type="entry name" value="RIBOSOMAL_S19"/>
    <property type="match status" value="1"/>
</dbReference>
<protein>
    <recommendedName>
        <fullName evidence="1">Small ribosomal subunit protein uS19</fullName>
    </recommendedName>
    <alternativeName>
        <fullName evidence="2">30S ribosomal protein S19</fullName>
    </alternativeName>
</protein>
<evidence type="ECO:0000255" key="1">
    <source>
        <dbReference type="HAMAP-Rule" id="MF_00531"/>
    </source>
</evidence>
<evidence type="ECO:0000305" key="2"/>
<accession>A6T3K0</accession>
<keyword id="KW-0687">Ribonucleoprotein</keyword>
<keyword id="KW-0689">Ribosomal protein</keyword>
<keyword id="KW-0694">RNA-binding</keyword>
<keyword id="KW-0699">rRNA-binding</keyword>